<feature type="chain" id="PRO_0000235774" description="Ribonuclease HII">
    <location>
        <begin position="1"/>
        <end position="260"/>
    </location>
</feature>
<feature type="domain" description="RNase H type-2" evidence="2">
    <location>
        <begin position="75"/>
        <end position="260"/>
    </location>
</feature>
<feature type="binding site" evidence="1">
    <location>
        <position position="81"/>
    </location>
    <ligand>
        <name>a divalent metal cation</name>
        <dbReference type="ChEBI" id="CHEBI:60240"/>
    </ligand>
</feature>
<feature type="binding site" evidence="1">
    <location>
        <position position="82"/>
    </location>
    <ligand>
        <name>a divalent metal cation</name>
        <dbReference type="ChEBI" id="CHEBI:60240"/>
    </ligand>
</feature>
<feature type="binding site" evidence="1">
    <location>
        <position position="173"/>
    </location>
    <ligand>
        <name>a divalent metal cation</name>
        <dbReference type="ChEBI" id="CHEBI:60240"/>
    </ligand>
</feature>
<name>RNH2_STRT2</name>
<sequence>MGSILMATIKEVKEQLAILRDLDDPRWASFEEDSRTGVQAAIRKRRKAILAELAEEERLEILLNYEKSLYARGIELIAGVDEVGRGPLAGPVVAAAVILPKLCKIKGLNDSKKIPKSKHEAIYNQVMKEAVAVGIGIKDNYVIDDVNIYEATKLAMIEAIEKLNPQPEHLLIDAMNLDLPIEQTSIIKGDANSLSIAAASIVAKVTRDKMMADYEQEFPGYAFAKNAGYGTKEHLSGIDKFGVTPIHRRSFEPIKSIIKK</sequence>
<accession>Q5M4N6</accession>
<gene>
    <name evidence="1" type="primary">rnhB</name>
    <name type="ordered locus">stu0894</name>
</gene>
<reference key="1">
    <citation type="journal article" date="2004" name="Nat. Biotechnol.">
        <title>Complete sequence and comparative genome analysis of the dairy bacterium Streptococcus thermophilus.</title>
        <authorList>
            <person name="Bolotin A."/>
            <person name="Quinquis B."/>
            <person name="Renault P."/>
            <person name="Sorokin A."/>
            <person name="Ehrlich S.D."/>
            <person name="Kulakauskas S."/>
            <person name="Lapidus A."/>
            <person name="Goltsman E."/>
            <person name="Mazur M."/>
            <person name="Pusch G.D."/>
            <person name="Fonstein M."/>
            <person name="Overbeek R."/>
            <person name="Kyprides N."/>
            <person name="Purnelle B."/>
            <person name="Prozzi D."/>
            <person name="Ngui K."/>
            <person name="Masuy D."/>
            <person name="Hancy F."/>
            <person name="Burteau S."/>
            <person name="Boutry M."/>
            <person name="Delcour J."/>
            <person name="Goffeau A."/>
            <person name="Hols P."/>
        </authorList>
    </citation>
    <scope>NUCLEOTIDE SEQUENCE [LARGE SCALE GENOMIC DNA]</scope>
    <source>
        <strain>ATCC BAA-250 / LMG 18311</strain>
    </source>
</reference>
<evidence type="ECO:0000255" key="1">
    <source>
        <dbReference type="HAMAP-Rule" id="MF_00052"/>
    </source>
</evidence>
<evidence type="ECO:0000255" key="2">
    <source>
        <dbReference type="PROSITE-ProRule" id="PRU01319"/>
    </source>
</evidence>
<proteinExistence type="inferred from homology"/>
<keyword id="KW-0963">Cytoplasm</keyword>
<keyword id="KW-0255">Endonuclease</keyword>
<keyword id="KW-0378">Hydrolase</keyword>
<keyword id="KW-0464">Manganese</keyword>
<keyword id="KW-0479">Metal-binding</keyword>
<keyword id="KW-0540">Nuclease</keyword>
<keyword id="KW-1185">Reference proteome</keyword>
<dbReference type="EC" id="3.1.26.4" evidence="1"/>
<dbReference type="EMBL" id="CP000023">
    <property type="protein sequence ID" value="AAV60561.1"/>
    <property type="molecule type" value="Genomic_DNA"/>
</dbReference>
<dbReference type="SMR" id="Q5M4N6"/>
<dbReference type="STRING" id="264199.stu0894"/>
<dbReference type="KEGG" id="stl:stu0894"/>
<dbReference type="eggNOG" id="COG0164">
    <property type="taxonomic scope" value="Bacteria"/>
</dbReference>
<dbReference type="HOGENOM" id="CLU_036532_2_1_9"/>
<dbReference type="Proteomes" id="UP000001170">
    <property type="component" value="Chromosome"/>
</dbReference>
<dbReference type="GO" id="GO:0005737">
    <property type="term" value="C:cytoplasm"/>
    <property type="evidence" value="ECO:0007669"/>
    <property type="project" value="UniProtKB-SubCell"/>
</dbReference>
<dbReference type="GO" id="GO:0032299">
    <property type="term" value="C:ribonuclease H2 complex"/>
    <property type="evidence" value="ECO:0007669"/>
    <property type="project" value="TreeGrafter"/>
</dbReference>
<dbReference type="GO" id="GO:0030145">
    <property type="term" value="F:manganese ion binding"/>
    <property type="evidence" value="ECO:0007669"/>
    <property type="project" value="UniProtKB-UniRule"/>
</dbReference>
<dbReference type="GO" id="GO:0003723">
    <property type="term" value="F:RNA binding"/>
    <property type="evidence" value="ECO:0007669"/>
    <property type="project" value="InterPro"/>
</dbReference>
<dbReference type="GO" id="GO:0004523">
    <property type="term" value="F:RNA-DNA hybrid ribonuclease activity"/>
    <property type="evidence" value="ECO:0007669"/>
    <property type="project" value="UniProtKB-UniRule"/>
</dbReference>
<dbReference type="GO" id="GO:0043137">
    <property type="term" value="P:DNA replication, removal of RNA primer"/>
    <property type="evidence" value="ECO:0007669"/>
    <property type="project" value="TreeGrafter"/>
</dbReference>
<dbReference type="GO" id="GO:0006298">
    <property type="term" value="P:mismatch repair"/>
    <property type="evidence" value="ECO:0007669"/>
    <property type="project" value="TreeGrafter"/>
</dbReference>
<dbReference type="CDD" id="cd07182">
    <property type="entry name" value="RNase_HII_bacteria_HII_like"/>
    <property type="match status" value="1"/>
</dbReference>
<dbReference type="FunFam" id="3.30.420.10:FF:000006">
    <property type="entry name" value="Ribonuclease HII"/>
    <property type="match status" value="1"/>
</dbReference>
<dbReference type="Gene3D" id="3.30.420.10">
    <property type="entry name" value="Ribonuclease H-like superfamily/Ribonuclease H"/>
    <property type="match status" value="1"/>
</dbReference>
<dbReference type="HAMAP" id="MF_00052_B">
    <property type="entry name" value="RNase_HII_B"/>
    <property type="match status" value="1"/>
</dbReference>
<dbReference type="InterPro" id="IPR022898">
    <property type="entry name" value="RNase_HII"/>
</dbReference>
<dbReference type="InterPro" id="IPR001352">
    <property type="entry name" value="RNase_HII/HIII"/>
</dbReference>
<dbReference type="InterPro" id="IPR024567">
    <property type="entry name" value="RNase_HII/HIII_dom"/>
</dbReference>
<dbReference type="InterPro" id="IPR012337">
    <property type="entry name" value="RNaseH-like_sf"/>
</dbReference>
<dbReference type="InterPro" id="IPR036397">
    <property type="entry name" value="RNaseH_sf"/>
</dbReference>
<dbReference type="NCBIfam" id="NF000594">
    <property type="entry name" value="PRK00015.1-1"/>
    <property type="match status" value="1"/>
</dbReference>
<dbReference type="NCBIfam" id="NF000595">
    <property type="entry name" value="PRK00015.1-3"/>
    <property type="match status" value="1"/>
</dbReference>
<dbReference type="PANTHER" id="PTHR10954">
    <property type="entry name" value="RIBONUCLEASE H2 SUBUNIT A"/>
    <property type="match status" value="1"/>
</dbReference>
<dbReference type="PANTHER" id="PTHR10954:SF18">
    <property type="entry name" value="RIBONUCLEASE HII"/>
    <property type="match status" value="1"/>
</dbReference>
<dbReference type="Pfam" id="PF01351">
    <property type="entry name" value="RNase_HII"/>
    <property type="match status" value="1"/>
</dbReference>
<dbReference type="SUPFAM" id="SSF53098">
    <property type="entry name" value="Ribonuclease H-like"/>
    <property type="match status" value="1"/>
</dbReference>
<dbReference type="PROSITE" id="PS51975">
    <property type="entry name" value="RNASE_H_2"/>
    <property type="match status" value="1"/>
</dbReference>
<organism>
    <name type="scientific">Streptococcus thermophilus (strain ATCC BAA-250 / LMG 18311)</name>
    <dbReference type="NCBI Taxonomy" id="264199"/>
    <lineage>
        <taxon>Bacteria</taxon>
        <taxon>Bacillati</taxon>
        <taxon>Bacillota</taxon>
        <taxon>Bacilli</taxon>
        <taxon>Lactobacillales</taxon>
        <taxon>Streptococcaceae</taxon>
        <taxon>Streptococcus</taxon>
    </lineage>
</organism>
<protein>
    <recommendedName>
        <fullName evidence="1">Ribonuclease HII</fullName>
        <shortName evidence="1">RNase HII</shortName>
        <ecNumber evidence="1">3.1.26.4</ecNumber>
    </recommendedName>
</protein>
<comment type="function">
    <text evidence="1">Endonuclease that specifically degrades the RNA of RNA-DNA hybrids.</text>
</comment>
<comment type="catalytic activity">
    <reaction evidence="1">
        <text>Endonucleolytic cleavage to 5'-phosphomonoester.</text>
        <dbReference type="EC" id="3.1.26.4"/>
    </reaction>
</comment>
<comment type="cofactor">
    <cofactor evidence="1">
        <name>Mn(2+)</name>
        <dbReference type="ChEBI" id="CHEBI:29035"/>
    </cofactor>
    <cofactor evidence="1">
        <name>Mg(2+)</name>
        <dbReference type="ChEBI" id="CHEBI:18420"/>
    </cofactor>
    <text evidence="1">Manganese or magnesium. Binds 1 divalent metal ion per monomer in the absence of substrate. May bind a second metal ion after substrate binding.</text>
</comment>
<comment type="subcellular location">
    <subcellularLocation>
        <location evidence="1">Cytoplasm</location>
    </subcellularLocation>
</comment>
<comment type="similarity">
    <text evidence="1">Belongs to the RNase HII family.</text>
</comment>